<protein>
    <recommendedName>
        <fullName>Dual specificity mitogen-activated protein kinase kinase 7</fullName>
        <shortName>MAP kinase kinase 7</shortName>
        <shortName>MAPKK 7</shortName>
        <ecNumber evidence="19 21">2.7.12.2</ecNumber>
    </recommendedName>
    <alternativeName>
        <fullName>JNK-activating kinase 2</fullName>
    </alternativeName>
    <alternativeName>
        <fullName>MAPK/ERK kinase 7</fullName>
        <shortName>MEK 7</shortName>
    </alternativeName>
    <alternativeName>
        <fullName>c-Jun N-terminal kinase kinase 2</fullName>
        <shortName>JNK kinase 2</shortName>
        <shortName>JNKK 2</shortName>
    </alternativeName>
</protein>
<dbReference type="EC" id="2.7.12.2" evidence="19 21"/>
<dbReference type="EMBL" id="AF026216">
    <property type="protein sequence ID" value="AAB81848.1"/>
    <property type="molecule type" value="mRNA"/>
</dbReference>
<dbReference type="EMBL" id="U74463">
    <property type="protein sequence ID" value="AAC53364.1"/>
    <property type="molecule type" value="mRNA"/>
</dbReference>
<dbReference type="EMBL" id="U74464">
    <property type="protein sequence ID" value="AAC53365.1"/>
    <property type="molecule type" value="mRNA"/>
</dbReference>
<dbReference type="EMBL" id="AB005654">
    <property type="protein sequence ID" value="BAA24383.1"/>
    <property type="molecule type" value="mRNA"/>
</dbReference>
<dbReference type="EMBL" id="AF022112">
    <property type="protein sequence ID" value="AAC16274.1"/>
    <property type="molecule type" value="mRNA"/>
</dbReference>
<dbReference type="EMBL" id="AF022113">
    <property type="protein sequence ID" value="AAC16275.1"/>
    <property type="molecule type" value="mRNA"/>
</dbReference>
<dbReference type="EMBL" id="U93030">
    <property type="protein sequence ID" value="AAB63447.1"/>
    <property type="molecule type" value="mRNA"/>
</dbReference>
<dbReference type="EMBL" id="U93031">
    <property type="protein sequence ID" value="AAB63448.1"/>
    <property type="molecule type" value="Genomic_DNA"/>
</dbReference>
<dbReference type="EMBL" id="AF060943">
    <property type="protein sequence ID" value="AAD15819.1"/>
    <property type="molecule type" value="mRNA"/>
</dbReference>
<dbReference type="EMBL" id="AF060944">
    <property type="protein sequence ID" value="AAD15820.1"/>
    <property type="molecule type" value="mRNA"/>
</dbReference>
<dbReference type="EMBL" id="AF060945">
    <property type="protein sequence ID" value="AAD15821.1"/>
    <property type="molecule type" value="mRNA"/>
</dbReference>
<dbReference type="EMBL" id="AF060946">
    <property type="protein sequence ID" value="AAD15822.1"/>
    <property type="molecule type" value="mRNA"/>
</dbReference>
<dbReference type="EMBL" id="AF060947">
    <property type="protein sequence ID" value="AAD15823.1"/>
    <property type="molecule type" value="mRNA"/>
</dbReference>
<dbReference type="EMBL" id="AK028772">
    <property type="protein sequence ID" value="BAC26111.1"/>
    <property type="molecule type" value="mRNA"/>
</dbReference>
<dbReference type="EMBL" id="AK031137">
    <property type="protein sequence ID" value="BAC27272.1"/>
    <property type="molecule type" value="mRNA"/>
</dbReference>
<dbReference type="EMBL" id="AK165184">
    <property type="protein sequence ID" value="BAE38066.1"/>
    <property type="molecule type" value="mRNA"/>
</dbReference>
<dbReference type="EMBL" id="BC070467">
    <property type="protein sequence ID" value="AAH70467.1"/>
    <property type="molecule type" value="mRNA"/>
</dbReference>
<dbReference type="CCDS" id="CCDS40208.1">
    <molecule id="Q8CE90-7"/>
</dbReference>
<dbReference type="CCDS" id="CCDS40209.1">
    <molecule id="Q8CE90-2"/>
</dbReference>
<dbReference type="CCDS" id="CCDS52474.1">
    <molecule id="Q8CE90-6"/>
</dbReference>
<dbReference type="CCDS" id="CCDS80852.1">
    <molecule id="Q8CE90-8"/>
</dbReference>
<dbReference type="CCDS" id="CCDS80853.1">
    <molecule id="Q8CE90-3"/>
</dbReference>
<dbReference type="CCDS" id="CCDS80854.1">
    <molecule id="Q8CE90-4"/>
</dbReference>
<dbReference type="RefSeq" id="NP_001036022.1">
    <molecule id="Q8CE90-7"/>
    <property type="nucleotide sequence ID" value="NM_001042557.2"/>
</dbReference>
<dbReference type="RefSeq" id="NP_001157644.1">
    <molecule id="Q8CE90-6"/>
    <property type="nucleotide sequence ID" value="NM_001164172.1"/>
</dbReference>
<dbReference type="RefSeq" id="NP_001278706.1">
    <molecule id="Q8CE90-8"/>
    <property type="nucleotide sequence ID" value="NM_001291777.1"/>
</dbReference>
<dbReference type="RefSeq" id="NP_001278707.1">
    <molecule id="Q8CE90-3"/>
    <property type="nucleotide sequence ID" value="NM_001291778.1"/>
</dbReference>
<dbReference type="RefSeq" id="NP_001278712.1">
    <molecule id="Q8CE90-4"/>
    <property type="nucleotide sequence ID" value="NM_001291783.1"/>
</dbReference>
<dbReference type="RefSeq" id="NP_036074.2">
    <molecule id="Q8CE90-2"/>
    <property type="nucleotide sequence ID" value="NM_011944.3"/>
</dbReference>
<dbReference type="SMR" id="Q8CE90"/>
<dbReference type="BioGRID" id="204954">
    <property type="interactions" value="10"/>
</dbReference>
<dbReference type="CORUM" id="Q8CE90"/>
<dbReference type="FunCoup" id="Q8CE90">
    <property type="interactions" value="3668"/>
</dbReference>
<dbReference type="IntAct" id="Q8CE90">
    <property type="interactions" value="1"/>
</dbReference>
<dbReference type="MINT" id="Q8CE90"/>
<dbReference type="STRING" id="10090.ENSMUSP00000003027"/>
<dbReference type="ChEMBL" id="CHEMBL4523385"/>
<dbReference type="iPTMnet" id="Q8CE90"/>
<dbReference type="PhosphoSitePlus" id="Q8CE90"/>
<dbReference type="PaxDb" id="10090-ENSMUSP00000003027"/>
<dbReference type="PeptideAtlas" id="Q8CE90"/>
<dbReference type="ProteomicsDB" id="290295">
    <molecule id="Q8CE90-1"/>
</dbReference>
<dbReference type="ProteomicsDB" id="290296">
    <molecule id="Q8CE90-2"/>
</dbReference>
<dbReference type="ProteomicsDB" id="290297">
    <molecule id="Q8CE90-3"/>
</dbReference>
<dbReference type="ProteomicsDB" id="290298">
    <molecule id="Q8CE90-4"/>
</dbReference>
<dbReference type="ProteomicsDB" id="290299">
    <molecule id="Q8CE90-5"/>
</dbReference>
<dbReference type="ProteomicsDB" id="290300">
    <molecule id="Q8CE90-6"/>
</dbReference>
<dbReference type="ProteomicsDB" id="290301">
    <molecule id="Q8CE90-7"/>
</dbReference>
<dbReference type="ProteomicsDB" id="290302">
    <molecule id="Q8CE90-8"/>
</dbReference>
<dbReference type="Pumba" id="Q8CE90"/>
<dbReference type="DNASU" id="26400"/>
<dbReference type="Ensembl" id="ENSMUST00000003027.14">
    <molecule id="Q8CE90-7"/>
    <property type="protein sequence ID" value="ENSMUSP00000003027.8"/>
    <property type="gene ID" value="ENSMUSG00000002948.20"/>
</dbReference>
<dbReference type="Ensembl" id="ENSMUST00000062686.11">
    <molecule id="Q8CE90-6"/>
    <property type="protein sequence ID" value="ENSMUSP00000054512.5"/>
    <property type="gene ID" value="ENSMUSG00000002948.20"/>
</dbReference>
<dbReference type="Ensembl" id="ENSMUST00000110994.9">
    <molecule id="Q8CE90-4"/>
    <property type="protein sequence ID" value="ENSMUSP00000106622.2"/>
    <property type="gene ID" value="ENSMUSG00000002948.20"/>
</dbReference>
<dbReference type="Ensembl" id="ENSMUST00000110995.8">
    <molecule id="Q8CE90-3"/>
    <property type="protein sequence ID" value="ENSMUSP00000106623.2"/>
    <property type="gene ID" value="ENSMUSG00000002948.20"/>
</dbReference>
<dbReference type="Ensembl" id="ENSMUST00000110996.2">
    <molecule id="Q8CE90-5"/>
    <property type="protein sequence ID" value="ENSMUSP00000106624.2"/>
    <property type="gene ID" value="ENSMUSG00000002948.20"/>
</dbReference>
<dbReference type="Ensembl" id="ENSMUST00000110998.9">
    <molecule id="Q8CE90-2"/>
    <property type="protein sequence ID" value="ENSMUSP00000106626.3"/>
    <property type="gene ID" value="ENSMUSG00000002948.20"/>
</dbReference>
<dbReference type="Ensembl" id="ENSMUST00000110999.8">
    <molecule id="Q8CE90-8"/>
    <property type="protein sequence ID" value="ENSMUSP00000106627.2"/>
    <property type="gene ID" value="ENSMUSG00000002948.20"/>
</dbReference>
<dbReference type="Ensembl" id="ENSMUST00000145165.8">
    <molecule id="Q8CE90-1"/>
    <property type="protein sequence ID" value="ENSMUSP00000117418.2"/>
    <property type="gene ID" value="ENSMUSG00000109061.2"/>
</dbReference>
<dbReference type="GeneID" id="26400"/>
<dbReference type="KEGG" id="mmu:26400"/>
<dbReference type="UCSC" id="uc009kti.2">
    <molecule id="Q8CE90-2"/>
    <property type="organism name" value="mouse"/>
</dbReference>
<dbReference type="UCSC" id="uc009ktj.2">
    <molecule id="Q8CE90-6"/>
    <property type="organism name" value="mouse"/>
</dbReference>
<dbReference type="UCSC" id="uc009ktk.2">
    <molecule id="Q8CE90-7"/>
    <property type="organism name" value="mouse"/>
</dbReference>
<dbReference type="UCSC" id="uc009ktm.2">
    <molecule id="Q8CE90-4"/>
    <property type="organism name" value="mouse"/>
</dbReference>
<dbReference type="UCSC" id="uc009ktn.2">
    <molecule id="Q8CE90-5"/>
    <property type="organism name" value="mouse"/>
</dbReference>
<dbReference type="UCSC" id="uc057ake.1">
    <molecule id="Q8CE90-8"/>
    <property type="organism name" value="mouse"/>
</dbReference>
<dbReference type="UCSC" id="uc057akf.1">
    <molecule id="Q8CE90-3"/>
    <property type="organism name" value="mouse"/>
</dbReference>
<dbReference type="AGR" id="MGI:1346871"/>
<dbReference type="CTD" id="5609"/>
<dbReference type="MGI" id="MGI:1346871">
    <property type="gene designation" value="Map2k7"/>
</dbReference>
<dbReference type="VEuPathDB" id="HostDB:ENSMUSG00000002948"/>
<dbReference type="VEuPathDB" id="HostDB:ENSMUSG00000109061"/>
<dbReference type="eggNOG" id="KOG0983">
    <property type="taxonomic scope" value="Eukaryota"/>
</dbReference>
<dbReference type="GeneTree" id="ENSGT00940000158914"/>
<dbReference type="HOGENOM" id="CLU_000288_63_23_1"/>
<dbReference type="InParanoid" id="Q8CE90"/>
<dbReference type="OMA" id="NVWICME"/>
<dbReference type="OrthoDB" id="23052at9989"/>
<dbReference type="PhylomeDB" id="Q8CE90"/>
<dbReference type="TreeFam" id="TF350701"/>
<dbReference type="BRENDA" id="2.7.12.2">
    <property type="organism ID" value="3474"/>
</dbReference>
<dbReference type="Reactome" id="R-MMU-2559580">
    <property type="pathway name" value="Oxidative Stress Induced Senescence"/>
</dbReference>
<dbReference type="Reactome" id="R-MMU-2871796">
    <property type="pathway name" value="FCERI mediated MAPK activation"/>
</dbReference>
<dbReference type="Reactome" id="R-MMU-450321">
    <property type="pathway name" value="JNK (c-Jun kinases) phosphorylation and activation mediated by activated human TAK1"/>
</dbReference>
<dbReference type="BioGRID-ORCS" id="26400">
    <property type="hits" value="4 hits in 79 CRISPR screens"/>
</dbReference>
<dbReference type="ChiTaRS" id="Map2k7">
    <property type="organism name" value="mouse"/>
</dbReference>
<dbReference type="PRO" id="PR:Q8CE90"/>
<dbReference type="Proteomes" id="UP000000589">
    <property type="component" value="Chromosome 8"/>
</dbReference>
<dbReference type="RNAct" id="Q8CE90">
    <property type="molecule type" value="protein"/>
</dbReference>
<dbReference type="Bgee" id="ENSMUSG00000002948">
    <property type="expression patterns" value="Expressed in external carotid artery and 258 other cell types or tissues"/>
</dbReference>
<dbReference type="ExpressionAtlas" id="Q8CE90">
    <property type="expression patterns" value="baseline and differential"/>
</dbReference>
<dbReference type="GO" id="GO:0005737">
    <property type="term" value="C:cytoplasm"/>
    <property type="evidence" value="ECO:0000314"/>
    <property type="project" value="UniProtKB"/>
</dbReference>
<dbReference type="GO" id="GO:0005634">
    <property type="term" value="C:nucleus"/>
    <property type="evidence" value="ECO:0000314"/>
    <property type="project" value="UniProtKB"/>
</dbReference>
<dbReference type="GO" id="GO:0005524">
    <property type="term" value="F:ATP binding"/>
    <property type="evidence" value="ECO:0007669"/>
    <property type="project" value="UniProtKB-KW"/>
</dbReference>
<dbReference type="GO" id="GO:0008545">
    <property type="term" value="F:JUN kinase kinase activity"/>
    <property type="evidence" value="ECO:0000314"/>
    <property type="project" value="UniProtKB"/>
</dbReference>
<dbReference type="GO" id="GO:0000287">
    <property type="term" value="F:magnesium ion binding"/>
    <property type="evidence" value="ECO:0000314"/>
    <property type="project" value="UniProtKB"/>
</dbReference>
<dbReference type="GO" id="GO:0004707">
    <property type="term" value="F:MAP kinase activity"/>
    <property type="evidence" value="ECO:0000314"/>
    <property type="project" value="UniProtKB"/>
</dbReference>
<dbReference type="GO" id="GO:0019901">
    <property type="term" value="F:protein kinase binding"/>
    <property type="evidence" value="ECO:0007669"/>
    <property type="project" value="Ensembl"/>
</dbReference>
<dbReference type="GO" id="GO:0019903">
    <property type="term" value="F:protein phosphatase binding"/>
    <property type="evidence" value="ECO:0000353"/>
    <property type="project" value="BHF-UCL"/>
</dbReference>
<dbReference type="GO" id="GO:0106310">
    <property type="term" value="F:protein serine kinase activity"/>
    <property type="evidence" value="ECO:0007669"/>
    <property type="project" value="RHEA"/>
</dbReference>
<dbReference type="GO" id="GO:0004713">
    <property type="term" value="F:protein tyrosine kinase activity"/>
    <property type="evidence" value="ECO:0007669"/>
    <property type="project" value="UniProtKB-KW"/>
</dbReference>
<dbReference type="GO" id="GO:0006915">
    <property type="term" value="P:apoptotic process"/>
    <property type="evidence" value="ECO:0007669"/>
    <property type="project" value="UniProtKB-KW"/>
</dbReference>
<dbReference type="GO" id="GO:0071347">
    <property type="term" value="P:cellular response to interleukin-1"/>
    <property type="evidence" value="ECO:0000315"/>
    <property type="project" value="UniProtKB"/>
</dbReference>
<dbReference type="GO" id="GO:0071222">
    <property type="term" value="P:cellular response to lipopolysaccharide"/>
    <property type="evidence" value="ECO:0000315"/>
    <property type="project" value="UniProtKB"/>
</dbReference>
<dbReference type="GO" id="GO:0007254">
    <property type="term" value="P:JNK cascade"/>
    <property type="evidence" value="ECO:0000314"/>
    <property type="project" value="BHF-UCL"/>
</dbReference>
<dbReference type="GO" id="GO:0045893">
    <property type="term" value="P:positive regulation of DNA-templated transcription"/>
    <property type="evidence" value="ECO:0000250"/>
    <property type="project" value="UniProtKB"/>
</dbReference>
<dbReference type="GO" id="GO:0070374">
    <property type="term" value="P:positive regulation of ERK1 and ERK2 cascade"/>
    <property type="evidence" value="ECO:0000250"/>
    <property type="project" value="UniProtKB"/>
</dbReference>
<dbReference type="GO" id="GO:0046330">
    <property type="term" value="P:positive regulation of JNK cascade"/>
    <property type="evidence" value="ECO:0000314"/>
    <property type="project" value="UniProtKB"/>
</dbReference>
<dbReference type="GO" id="GO:0032206">
    <property type="term" value="P:positive regulation of telomere maintenance"/>
    <property type="evidence" value="ECO:0007669"/>
    <property type="project" value="Ensembl"/>
</dbReference>
<dbReference type="GO" id="GO:2000671">
    <property type="term" value="P:regulation of motor neuron apoptotic process"/>
    <property type="evidence" value="ECO:0000315"/>
    <property type="project" value="MGI"/>
</dbReference>
<dbReference type="GO" id="GO:0009408">
    <property type="term" value="P:response to heat"/>
    <property type="evidence" value="ECO:0007669"/>
    <property type="project" value="Ensembl"/>
</dbReference>
<dbReference type="GO" id="GO:0006970">
    <property type="term" value="P:response to osmotic stress"/>
    <property type="evidence" value="ECO:0007669"/>
    <property type="project" value="Ensembl"/>
</dbReference>
<dbReference type="GO" id="GO:0034612">
    <property type="term" value="P:response to tumor necrosis factor"/>
    <property type="evidence" value="ECO:0007669"/>
    <property type="project" value="Ensembl"/>
</dbReference>
<dbReference type="GO" id="GO:0009411">
    <property type="term" value="P:response to UV"/>
    <property type="evidence" value="ECO:0007669"/>
    <property type="project" value="Ensembl"/>
</dbReference>
<dbReference type="GO" id="GO:0009611">
    <property type="term" value="P:response to wounding"/>
    <property type="evidence" value="ECO:0000315"/>
    <property type="project" value="MGI"/>
</dbReference>
<dbReference type="GO" id="GO:0051403">
    <property type="term" value="P:stress-activated MAPK cascade"/>
    <property type="evidence" value="ECO:0007669"/>
    <property type="project" value="Ensembl"/>
</dbReference>
<dbReference type="CDD" id="cd06618">
    <property type="entry name" value="PKc_MKK7"/>
    <property type="match status" value="1"/>
</dbReference>
<dbReference type="FunFam" id="3.30.200.20:FF:000040">
    <property type="entry name" value="Dual specificity mitogen-activated protein kinase kinase"/>
    <property type="match status" value="1"/>
</dbReference>
<dbReference type="FunFam" id="1.10.510.10:FF:000214">
    <property type="entry name" value="Dual specificity mitogen-activated protein kinase kinase 7"/>
    <property type="match status" value="1"/>
</dbReference>
<dbReference type="Gene3D" id="3.30.200.20">
    <property type="entry name" value="Phosphorylase Kinase, domain 1"/>
    <property type="match status" value="1"/>
</dbReference>
<dbReference type="Gene3D" id="1.10.510.10">
    <property type="entry name" value="Transferase(Phosphotransferase) domain 1"/>
    <property type="match status" value="1"/>
</dbReference>
<dbReference type="InterPro" id="IPR052468">
    <property type="entry name" value="Dual_spec_MAPK_kinase"/>
</dbReference>
<dbReference type="InterPro" id="IPR011009">
    <property type="entry name" value="Kinase-like_dom_sf"/>
</dbReference>
<dbReference type="InterPro" id="IPR000719">
    <property type="entry name" value="Prot_kinase_dom"/>
</dbReference>
<dbReference type="InterPro" id="IPR008271">
    <property type="entry name" value="Ser/Thr_kinase_AS"/>
</dbReference>
<dbReference type="PANTHER" id="PTHR47238:SF2">
    <property type="entry name" value="DUAL SPECIFICITY MITOGEN-ACTIVATED PROTEIN KINASE KINASE HEMIPTEROUS"/>
    <property type="match status" value="1"/>
</dbReference>
<dbReference type="PANTHER" id="PTHR47238">
    <property type="entry name" value="MITOGEN-ACTIVATED PROTEIN KINASE KINASE 5"/>
    <property type="match status" value="1"/>
</dbReference>
<dbReference type="Pfam" id="PF00069">
    <property type="entry name" value="Pkinase"/>
    <property type="match status" value="1"/>
</dbReference>
<dbReference type="SMART" id="SM00220">
    <property type="entry name" value="S_TKc"/>
    <property type="match status" value="1"/>
</dbReference>
<dbReference type="SUPFAM" id="SSF56112">
    <property type="entry name" value="Protein kinase-like (PK-like)"/>
    <property type="match status" value="1"/>
</dbReference>
<dbReference type="PROSITE" id="PS50011">
    <property type="entry name" value="PROTEIN_KINASE_DOM"/>
    <property type="match status" value="1"/>
</dbReference>
<dbReference type="PROSITE" id="PS00108">
    <property type="entry name" value="PROTEIN_KINASE_ST"/>
    <property type="match status" value="1"/>
</dbReference>
<evidence type="ECO:0000250" key="1"/>
<evidence type="ECO:0000250" key="2">
    <source>
        <dbReference type="UniProtKB" id="O14733"/>
    </source>
</evidence>
<evidence type="ECO:0000250" key="3">
    <source>
        <dbReference type="UniProtKB" id="Q13131"/>
    </source>
</evidence>
<evidence type="ECO:0000255" key="4"/>
<evidence type="ECO:0000255" key="5">
    <source>
        <dbReference type="PROSITE-ProRule" id="PRU00159"/>
    </source>
</evidence>
<evidence type="ECO:0000255" key="6">
    <source>
        <dbReference type="PROSITE-ProRule" id="PRU10027"/>
    </source>
</evidence>
<evidence type="ECO:0000256" key="7">
    <source>
        <dbReference type="SAM" id="MobiDB-lite"/>
    </source>
</evidence>
<evidence type="ECO:0000269" key="8">
    <source>
    </source>
</evidence>
<evidence type="ECO:0000269" key="9">
    <source>
    </source>
</evidence>
<evidence type="ECO:0000269" key="10">
    <source>
    </source>
</evidence>
<evidence type="ECO:0000269" key="11">
    <source>
    </source>
</evidence>
<evidence type="ECO:0000269" key="12">
    <source>
    </source>
</evidence>
<evidence type="ECO:0000269" key="13">
    <source>
    </source>
</evidence>
<evidence type="ECO:0000269" key="14">
    <source>
    </source>
</evidence>
<evidence type="ECO:0000269" key="15">
    <source>
    </source>
</evidence>
<evidence type="ECO:0000269" key="16">
    <source>
    </source>
</evidence>
<evidence type="ECO:0000269" key="17">
    <source>
    </source>
</evidence>
<evidence type="ECO:0000269" key="18">
    <source>
    </source>
</evidence>
<evidence type="ECO:0000269" key="19">
    <source>
    </source>
</evidence>
<evidence type="ECO:0000269" key="20">
    <source>
    </source>
</evidence>
<evidence type="ECO:0000269" key="21">
    <source>
    </source>
</evidence>
<evidence type="ECO:0000303" key="22">
    <source>
    </source>
</evidence>
<evidence type="ECO:0000303" key="23">
    <source>
    </source>
</evidence>
<evidence type="ECO:0000303" key="24">
    <source>
    </source>
</evidence>
<evidence type="ECO:0000303" key="25">
    <source>
    </source>
</evidence>
<evidence type="ECO:0000303" key="26">
    <source>
    </source>
</evidence>
<evidence type="ECO:0000303" key="27">
    <source>
    </source>
</evidence>
<evidence type="ECO:0000305" key="28"/>
<evidence type="ECO:0000312" key="29">
    <source>
        <dbReference type="EMBL" id="AAB63447.1"/>
    </source>
</evidence>
<evidence type="ECO:0000312" key="30">
    <source>
        <dbReference type="EMBL" id="AAB81848.1"/>
    </source>
</evidence>
<evidence type="ECO:0000312" key="31">
    <source>
        <dbReference type="EMBL" id="AAC16274.1"/>
    </source>
</evidence>
<evidence type="ECO:0000312" key="32">
    <source>
        <dbReference type="EMBL" id="AAC16275.1"/>
    </source>
</evidence>
<evidence type="ECO:0000312" key="33">
    <source>
        <dbReference type="EMBL" id="AAC53365.1"/>
    </source>
</evidence>
<evidence type="ECO:0000312" key="34">
    <source>
        <dbReference type="EMBL" id="AAD15819.1"/>
    </source>
</evidence>
<evidence type="ECO:0000312" key="35">
    <source>
        <dbReference type="EMBL" id="AAH70467.1"/>
    </source>
</evidence>
<evidence type="ECO:0000312" key="36">
    <source>
        <dbReference type="EMBL" id="BAA24383.1"/>
    </source>
</evidence>
<evidence type="ECO:0000312" key="37">
    <source>
        <dbReference type="EMBL" id="BAC26111.1"/>
    </source>
</evidence>
<evidence type="ECO:0000312" key="38">
    <source>
        <dbReference type="EMBL" id="BAC27272.1"/>
    </source>
</evidence>
<evidence type="ECO:0000312" key="39">
    <source>
        <dbReference type="EMBL" id="BAE38066.1"/>
    </source>
</evidence>
<evidence type="ECO:0000312" key="40">
    <source>
        <dbReference type="MGI" id="MGI:1346871"/>
    </source>
</evidence>
<sequence>MAASSLEQKLSRLEAKLKQENREARRRIDLNLDISPQRPRPIIVITLSPAPAPSQRAALQLPLANDGGSRSPSSESSPQHPTPPTRPRHMLGLPSTLFTPRSMESIEIDQKLQEIMKQTGYLTIGGQRYQAEINDLENLGEMGSGTCGQVWKMRFRKTGHIIAVKQMRRSGNKEENKRILMDLDVVLKSHDCPYIVQCFGTFITNTDVFIAMELMGTCAEKLKKRMQGPIPERILGKMTVAIVKALYYLKEKHGVIHRDVKPSNILLDERGQIKLCDFGISGRLVDSKAKTRSAGCAAYMAPERIDPPDPTKPDYDIRADVWSLGISLVELATGQFPYKNCKTDFEVLTKVLQEEPPLLPGHMGFSGDFQSFVKDCLTKDHRKRPKYNKLLEHSFIKHYEILEVDVASWFKDVMAKTESPRTSGVLSQHHLPFFSTSVTWGAWPLAAQTPFQSGVIRCRGRVPSPRRATGGSGGQPCVCAGGPGPSFTEMGPSPSPMLSNTFFTPDPGACPGASTWGLPRRRLCQLLTTSTPGCC</sequence>
<organism>
    <name type="scientific">Mus musculus</name>
    <name type="common">Mouse</name>
    <dbReference type="NCBI Taxonomy" id="10090"/>
    <lineage>
        <taxon>Eukaryota</taxon>
        <taxon>Metazoa</taxon>
        <taxon>Chordata</taxon>
        <taxon>Craniata</taxon>
        <taxon>Vertebrata</taxon>
        <taxon>Euteleostomi</taxon>
        <taxon>Mammalia</taxon>
        <taxon>Eutheria</taxon>
        <taxon>Euarchontoglires</taxon>
        <taxon>Glires</taxon>
        <taxon>Rodentia</taxon>
        <taxon>Myomorpha</taxon>
        <taxon>Muroidea</taxon>
        <taxon>Muridae</taxon>
        <taxon>Murinae</taxon>
        <taxon>Mus</taxon>
        <taxon>Mus</taxon>
    </lineage>
</organism>
<feature type="initiator methionine" description="Removed" evidence="2">
    <location>
        <position position="1"/>
    </location>
</feature>
<feature type="chain" id="PRO_0000271406" description="Dual specificity mitogen-activated protein kinase kinase 7">
    <location>
        <begin position="2"/>
        <end position="535"/>
    </location>
</feature>
<feature type="domain" description="Protein kinase" evidence="5">
    <location>
        <begin position="136"/>
        <end position="396"/>
    </location>
</feature>
<feature type="region of interest" description="D domain" evidence="1">
    <location>
        <begin position="37"/>
        <end position="73"/>
    </location>
</feature>
<feature type="region of interest" description="Disordered" evidence="7">
    <location>
        <begin position="63"/>
        <end position="93"/>
    </location>
</feature>
<feature type="region of interest" description="DVD domain" evidence="1">
    <location>
        <begin position="393"/>
        <end position="416"/>
    </location>
</feature>
<feature type="coiled-coil region" evidence="4">
    <location>
        <begin position="2"/>
        <end position="30"/>
    </location>
</feature>
<feature type="compositionally biased region" description="Low complexity" evidence="7">
    <location>
        <begin position="69"/>
        <end position="79"/>
    </location>
</feature>
<feature type="active site" description="Proton acceptor" evidence="3 5 6">
    <location>
        <position position="259"/>
    </location>
</feature>
<feature type="binding site" evidence="3 5">
    <location>
        <begin position="142"/>
        <end position="150"/>
    </location>
    <ligand>
        <name>ATP</name>
        <dbReference type="ChEBI" id="CHEBI:30616"/>
    </ligand>
</feature>
<feature type="binding site" evidence="3 5">
    <location>
        <position position="165"/>
    </location>
    <ligand>
        <name>ATP</name>
        <dbReference type="ChEBI" id="CHEBI:30616"/>
    </ligand>
</feature>
<feature type="site" description="Cleavage; by anthrax lethal factor" evidence="1">
    <location>
        <begin position="60"/>
        <end position="61"/>
    </location>
</feature>
<feature type="site" description="Cleavage; by anthrax lethal factor" evidence="1">
    <location>
        <begin position="92"/>
        <end position="93"/>
    </location>
</feature>
<feature type="modified residue" description="N-acetylalanine" evidence="2">
    <location>
        <position position="2"/>
    </location>
</feature>
<feature type="modified residue" description="Phosphoserine; by MAP3K" evidence="1">
    <location>
        <position position="287"/>
    </location>
</feature>
<feature type="modified residue" description="Phosphothreonine; by MAP3K" evidence="1">
    <location>
        <position position="291"/>
    </location>
</feature>
<feature type="modified residue" description="Phosphoserine" evidence="2">
    <location>
        <position position="427"/>
    </location>
</feature>
<feature type="splice variant" id="VSP_052265" description="In isoform 3 and isoform 4." evidence="27">
    <location>
        <begin position="1"/>
        <end position="89"/>
    </location>
</feature>
<feature type="splice variant" id="VSP_052264" description="In isoform 5." evidence="24">
    <location>
        <begin position="1"/>
        <end position="45"/>
    </location>
</feature>
<feature type="splice variant" id="VSP_052266" description="In isoform 2 and isoform 8." evidence="23 24 27">
    <original>IIVITLSPAPAPSQRAA</original>
    <variation>T</variation>
    <location>
        <begin position="42"/>
        <end position="58"/>
    </location>
</feature>
<feature type="splice variant" id="VSP_052267" description="In isoform 5." evidence="24">
    <original>TLSPAPAPSQRA</original>
    <variation>MLTPFMPLVFNSP</variation>
    <location>
        <begin position="46"/>
        <end position="57"/>
    </location>
</feature>
<feature type="splice variant" id="VSP_052268" description="In isoform 2, isoform 4, isoform 5 and isoform 6." evidence="22 23 24 26 27">
    <original>S</original>
    <variation>R</variation>
    <location>
        <position position="435"/>
    </location>
</feature>
<feature type="splice variant" id="VSP_052269" description="In isoform 2, isoform 4, isoform 5 and isoform 6." evidence="22 23 24 26 27">
    <location>
        <begin position="436"/>
        <end position="535"/>
    </location>
</feature>
<feature type="splice variant" id="VSP_052270" description="In isoform 3, isoform 7 and isoform 8." evidence="25 27">
    <original>TSVTWGAWPLAAQTPFQSGVIRCRGRVPSPRRATGGSGGQPCVCAGGPGPSFTEMGPSPSPMLSNTFFTPDPGACPGASTWGLP</original>
    <variation>GSLEESPTSPPSPKSFPLSPAIPQAQAEWVSGR</variation>
    <location>
        <begin position="436"/>
        <end position="519"/>
    </location>
</feature>
<feature type="splice variant" id="VSP_052271" description="In isoform 3, isoform 7 and isoform 8." evidence="25 27">
    <location>
        <begin position="520"/>
        <end position="535"/>
    </location>
</feature>
<feature type="sequence conflict" description="In Ref. 5; AAB63448." evidence="28" ref="5">
    <original>L</original>
    <variation>T</variation>
    <location>
        <position position="47"/>
    </location>
</feature>
<feature type="sequence conflict" description="In Ref. 6; BAC27272." evidence="28" ref="6">
    <original>Q</original>
    <variation>K</variation>
    <location>
        <position position="166"/>
    </location>
</feature>
<feature type="sequence conflict" description="In Ref. 4; AAC16274." evidence="28" ref="4">
    <original>A</original>
    <variation>V</variation>
    <location>
        <position position="211"/>
    </location>
</feature>
<feature type="sequence conflict" description="In Ref. 1; AAB81848." evidence="28" ref="1">
    <original>T</original>
    <variation>I</variation>
    <location>
        <position position="217"/>
    </location>
</feature>
<feature type="sequence conflict" description="In Ref. 5; AAD15819/AAD15821/AAD15823." evidence="28" ref="5">
    <original>I</original>
    <variation>II</variation>
    <location>
        <position position="396"/>
    </location>
</feature>
<feature type="sequence conflict" description="In Ref. 1; AAB81848." evidence="28" ref="1">
    <original>E</original>
    <variation>D</variation>
    <location>
        <position position="418"/>
    </location>
</feature>
<name>MP2K7_MOUSE</name>
<comment type="function">
    <text evidence="9 10 15 16 17 18 19 21">Dual specificity protein kinase which acts as an essential component of the MAP kinase signal transduction pathway. Essential component of the stress-activated protein kinase/c-Jun N-terminal kinase (SAP/JNK) signaling pathway. With MAP2K4/MKK4, is the one of the only known kinase to directly activate the stress-activated protein kinase/c-Jun N-terminal kinases MAPK8/JNK1, MAPK9/JNK2 and MAPK10/JNK3. MAP2K4/MKK4 and MAP2K7/MKK7 both activate the JNKs by phosphorylation, but they differ in their preference for the phosphorylation site in the Thr-Pro-Tyr motif. MAP2K4/MKK4 shows preference for phosphorylation of the Tyr residue and MAP2K7/MKK7 for the Thr residue. The monophosphorylation of JNKs on the Thr residue is sufficient to increase JNK activity indicating that MAP2K7/MKK7 is important to trigger JNK activity, while the additional phosphorylation of the Tyr residue by MAP2K4/MKK4 ensures optimal JNK activation. Has a specific role in JNK signal transduction pathway activated by pro-inflammatory cytokines. The MKK/JNK signaling pathway is also involved in mitochondrial death signaling pathway, including the release cytochrome c, leading to apoptosis. Part of a non-canonical MAPK signaling pathway, composed of the upstream MAP3K12 kinase and downstream MAP kinases MAPK1/ERK2 and MAPK3/ERK1, that enhances the AP-1-mediated transcription of APP in response to APOE (PubMed:28111074).</text>
</comment>
<comment type="catalytic activity">
    <reaction evidence="19 21">
        <text>L-seryl-[protein] + ATP = O-phospho-L-seryl-[protein] + ADP + H(+)</text>
        <dbReference type="Rhea" id="RHEA:17989"/>
        <dbReference type="Rhea" id="RHEA-COMP:9863"/>
        <dbReference type="Rhea" id="RHEA-COMP:11604"/>
        <dbReference type="ChEBI" id="CHEBI:15378"/>
        <dbReference type="ChEBI" id="CHEBI:29999"/>
        <dbReference type="ChEBI" id="CHEBI:30616"/>
        <dbReference type="ChEBI" id="CHEBI:83421"/>
        <dbReference type="ChEBI" id="CHEBI:456216"/>
        <dbReference type="EC" id="2.7.12.2"/>
    </reaction>
</comment>
<comment type="catalytic activity">
    <reaction evidence="19 21">
        <text>L-threonyl-[protein] + ATP = O-phospho-L-threonyl-[protein] + ADP + H(+)</text>
        <dbReference type="Rhea" id="RHEA:46608"/>
        <dbReference type="Rhea" id="RHEA-COMP:11060"/>
        <dbReference type="Rhea" id="RHEA-COMP:11605"/>
        <dbReference type="ChEBI" id="CHEBI:15378"/>
        <dbReference type="ChEBI" id="CHEBI:30013"/>
        <dbReference type="ChEBI" id="CHEBI:30616"/>
        <dbReference type="ChEBI" id="CHEBI:61977"/>
        <dbReference type="ChEBI" id="CHEBI:456216"/>
        <dbReference type="EC" id="2.7.12.2"/>
    </reaction>
</comment>
<comment type="catalytic activity">
    <reaction evidence="19 21">
        <text>L-tyrosyl-[protein] + ATP = O-phospho-L-tyrosyl-[protein] + ADP + H(+)</text>
        <dbReference type="Rhea" id="RHEA:10596"/>
        <dbReference type="Rhea" id="RHEA-COMP:10136"/>
        <dbReference type="Rhea" id="RHEA-COMP:20101"/>
        <dbReference type="ChEBI" id="CHEBI:15378"/>
        <dbReference type="ChEBI" id="CHEBI:30616"/>
        <dbReference type="ChEBI" id="CHEBI:46858"/>
        <dbReference type="ChEBI" id="CHEBI:61978"/>
        <dbReference type="ChEBI" id="CHEBI:456216"/>
        <dbReference type="EC" id="2.7.12.2"/>
    </reaction>
</comment>
<comment type="cofactor">
    <cofactor evidence="19 21">
        <name>Mg(2+)</name>
        <dbReference type="ChEBI" id="CHEBI:18420"/>
    </cofactor>
</comment>
<comment type="activity regulation">
    <text evidence="21">Activated by phosphorylation by specific MAP kinase kinase kinases such as MAP3K1/MEKK1, MAP3K3/MEKK3, MAP3K11/MLK3 and MAP3K12/DLK. Isoforms 3 and 4 have lower basal activity but a higher level of inducible activation, than isoforms 2, 6, 7 and 8.</text>
</comment>
<comment type="subunit">
    <text evidence="2 8 13 14 20">Interacts with RASSF7, the interaction promotes phosphorylation. Interacts with VRK2 (By similarity). Interacts (via its D domain) with its substrates MAPK8/JNK1, MAPK9/JNK2 and MAPK10/JNK3 (By similarity). Interacts (via its DVD domain) with MAP3Ks activators like MAP3K5/ASK1 and MAP3K1/MEKK1 (By similarity). Interacts with SH3RF1, MAPK8IP1/JIP1, MAPK8IP2/JIP2 and MAPK8IP3/JIP3 scaffold proteins. Found in a complex with SH3RF1, RAC1, MAP3K11/MLK3, MAPK8IP1/JIP1 and MAPK8/JNK1 (PubMed:23963642). Found in a complex with SH3RF1, RAC2, MAP3K7/TAK1, MAPK8IP1/JIP1, MAPK8/JNK1 and MAPK9/JNK2 (PubMed:27084103).</text>
</comment>
<comment type="subcellular location">
    <subcellularLocation>
        <location evidence="21">Nucleus</location>
    </subcellularLocation>
    <subcellularLocation>
        <location evidence="21">Cytoplasm</location>
    </subcellularLocation>
</comment>
<comment type="alternative products">
    <event type="alternative splicing"/>
    <isoform>
        <id>Q8CE90-1</id>
        <name evidence="12">1</name>
        <sequence type="displayed"/>
    </isoform>
    <isoform>
        <id>Q8CE90-2</id>
        <name evidence="12 16 21">2</name>
        <name evidence="16">a</name>
        <name evidence="21">beta 1</name>
        <sequence type="described" ref="VSP_052266 VSP_052268 VSP_052269"/>
    </isoform>
    <isoform>
        <id>Q8CE90-3</id>
        <name evidence="17 21">3</name>
        <name evidence="21">alpha 2</name>
        <sequence type="described" ref="VSP_052265 VSP_052270 VSP_052271"/>
    </isoform>
    <isoform>
        <id>Q8CE90-4</id>
        <name evidence="21">4</name>
        <name evidence="21">alpha 1</name>
        <sequence type="described" ref="VSP_052265 VSP_052268 VSP_052269"/>
    </isoform>
    <isoform>
        <id>Q8CE90-5</id>
        <name evidence="16">5</name>
        <name evidence="16">b</name>
        <sequence type="described" ref="VSP_052264 VSP_052267 VSP_052268 VSP_052269"/>
    </isoform>
    <isoform>
        <id>Q8CE90-6</id>
        <name evidence="11 18 21">6</name>
        <name evidence="11">b</name>
        <name evidence="21">gamma 1</name>
        <sequence type="described" ref="VSP_052268 VSP_052269"/>
    </isoform>
    <isoform>
        <id>Q8CE90-7</id>
        <name evidence="21">7</name>
        <name evidence="21">gamma 2</name>
        <sequence type="described" ref="VSP_052270 VSP_052271"/>
    </isoform>
    <isoform>
        <id>Q8CE90-8</id>
        <name evidence="21">8</name>
        <name evidence="21">beta 2</name>
        <sequence type="described" ref="VSP_052266 VSP_052270 VSP_052271"/>
    </isoform>
</comment>
<comment type="tissue specificity">
    <text evidence="16 18 19">Expressed at high levels in brain, lung, liver, skeletal muscle, kidney, and testis and at lower levels in the heart and spleen.</text>
</comment>
<comment type="developmental stage">
    <text evidence="18">Expressed at high levels in the brain, spinal cord, eyes, muscle, lungs, vertebrae, and intestine and at lower levels in the heart and livers at 12.5 dpc. At later stages of embryogenesis (14.5 dpc, 16.5 dpc, and 18.5 dpc) high levels were found in the brain, retina, bone marrow, skin, intestine, lung epithelium and the epithelial layers lining the olfactory cavity and developing teeth and whiskers.</text>
</comment>
<comment type="domain">
    <text>The DVD domain (residues 393-413) contains a conserved docking site and is found in the mammalian MAP kinase kinases (MAP2Ks). The DVD sites bind to their specific upstream MAP kinase kinase kinases (MAP3Ks) and are essential for activation.</text>
</comment>
<comment type="domain">
    <text>The D domain (residues 37-73) contains a conserved docking site and is required for the binding to MAPK substrates.</text>
</comment>
<comment type="PTM">
    <text evidence="21">Activated by phosphorylation on Ser-287 and Thr-291 by MAP kinase kinase kinases (MAP3Ks).</text>
</comment>
<comment type="similarity">
    <text evidence="28">Belongs to the protein kinase superfamily. STE Ser/Thr protein kinase family. MAP kinase kinase subfamily.</text>
</comment>
<gene>
    <name evidence="40" type="primary">Map2k7</name>
    <name evidence="31" type="synonym">Mkk7</name>
</gene>
<keyword id="KW-0007">Acetylation</keyword>
<keyword id="KW-0025">Alternative splicing</keyword>
<keyword id="KW-0053">Apoptosis</keyword>
<keyword id="KW-0067">ATP-binding</keyword>
<keyword id="KW-0175">Coiled coil</keyword>
<keyword id="KW-0963">Cytoplasm</keyword>
<keyword id="KW-0418">Kinase</keyword>
<keyword id="KW-0460">Magnesium</keyword>
<keyword id="KW-0479">Metal-binding</keyword>
<keyword id="KW-0547">Nucleotide-binding</keyword>
<keyword id="KW-0539">Nucleus</keyword>
<keyword id="KW-0597">Phosphoprotein</keyword>
<keyword id="KW-1185">Reference proteome</keyword>
<keyword id="KW-0723">Serine/threonine-protein kinase</keyword>
<keyword id="KW-0346">Stress response</keyword>
<keyword id="KW-0808">Transferase</keyword>
<keyword id="KW-0829">Tyrosine-protein kinase</keyword>
<reference evidence="28 30" key="1">
    <citation type="journal article" date="1997" name="J. Biol. Chem.">
        <title>Activation of stress-activated protein kinases/c-Jun N-terminal protein kinases (SAPKs/JNKs) by a novel mitogen-activated protein kinase kinase (MKK7).</title>
        <authorList>
            <person name="Yao Z."/>
            <person name="Diener K."/>
            <person name="Wang X.S."/>
            <person name="Zukowski M."/>
            <person name="Matsumoto G."/>
            <person name="Zhou G."/>
            <person name="Mo R."/>
            <person name="Sasaki T."/>
            <person name="Nishina H."/>
            <person name="Hui C.C."/>
            <person name="Tan T.-H."/>
            <person name="Woodgett J.P."/>
            <person name="Penninger J.M."/>
        </authorList>
    </citation>
    <scope>NUCLEOTIDE SEQUENCE [MRNA] (ISOFORM 6)</scope>
    <scope>FUNCTION</scope>
    <scope>TISSUE SPECIFICITY</scope>
    <scope>DEVELOPMENTAL STAGE</scope>
</reference>
<reference evidence="28 33" key="2">
    <citation type="journal article" date="1997" name="J. Biol. Chem.">
        <title>MKK7 is a stress-activated mitogen-activated protein kinase kinase functionally related to hemipterous.</title>
        <authorList>
            <person name="Holland P.M."/>
            <person name="Magali S."/>
            <person name="Campbell J.S."/>
            <person name="Noselli S."/>
            <person name="Cooper J.A."/>
        </authorList>
    </citation>
    <scope>NUCLEOTIDE SEQUENCE [MRNA] (ISOFORMS 2 AND 5)</scope>
    <scope>FUNCTION</scope>
    <scope>TISSUE SPECIFICITY</scope>
</reference>
<reference evidence="28 36" key="3">
    <citation type="journal article" date="1997" name="EMBO J.">
        <title>A novel SAPK/JNK kinase, MKK7, stimulated by TNFalpha and cellular stresses.</title>
        <authorList>
            <person name="Moriguchi T."/>
            <person name="Toyoshima F."/>
            <person name="Masuyama N."/>
            <person name="Hanafusa H."/>
            <person name="Gotoh Y."/>
            <person name="Nishida E."/>
        </authorList>
    </citation>
    <scope>NUCLEOTIDE SEQUENCE [MRNA] (ISOFORM 7)</scope>
    <scope>FUNCTION</scope>
</reference>
<reference evidence="28 31" key="4">
    <citation type="journal article" date="1998" name="J. Biol. Chem.">
        <title>Human mitogen-activated protein kinase kinase 7 (MKK7) is a highly conserved c-Jun N-terminal kinase/stress-activated protein kinase (JNK/SAPK) activated by environmental stresses and physiological stimuli.</title>
        <authorList>
            <person name="Foltz I.N."/>
            <person name="Gerl R.E."/>
            <person name="Wieler J.S."/>
            <person name="Luckach M."/>
            <person name="Salmon R.A."/>
            <person name="Schrader J.W."/>
        </authorList>
    </citation>
    <scope>NUCLEOTIDE SEQUENCE [MRNA] OF 1-311 (ISOFORMS 2/6)</scope>
    <scope>FUNCTION</scope>
    <scope>CATALYTIC ACTIVITY</scope>
    <scope>TISSUE SPECIFICITY</scope>
    <source>
        <tissue evidence="31">B-cell</tissue>
        <tissue evidence="32">Thymus</tissue>
    </source>
</reference>
<reference evidence="28 34" key="5">
    <citation type="journal article" date="1999" name="Mol. Cell. Biol.">
        <title>The MKK7 gene encodes a group of c-Jun NH2-terminal kinase kinases.</title>
        <authorList>
            <person name="Tournier C."/>
            <person name="Whitmarsh A.J."/>
            <person name="Cavanagh J."/>
            <person name="Barrett T."/>
            <person name="Davis R.J."/>
        </authorList>
    </citation>
    <scope>NUCLEOTIDE SEQUENCE [MRNA] (ISOFORMS 2; 3; 4; 6; 7 AND 8)</scope>
    <scope>NUCLEOTIDE SEQUENCE [GENOMIC DNA] OF 47-535 (ISOFORM 6)</scope>
    <scope>FUNCTION</scope>
    <scope>CATALYTIC ACTIVITY</scope>
    <scope>ACTIVITY REGULATION</scope>
    <scope>PHOSPHORYLATION</scope>
    <scope>SUBCELLULAR LOCATION</scope>
    <source>
        <strain evidence="29">CD-1</strain>
        <tissue evidence="29">Testis</tissue>
    </source>
</reference>
<reference evidence="28 37" key="6">
    <citation type="journal article" date="2005" name="Science">
        <title>The transcriptional landscape of the mammalian genome.</title>
        <authorList>
            <person name="Carninci P."/>
            <person name="Kasukawa T."/>
            <person name="Katayama S."/>
            <person name="Gough J."/>
            <person name="Frith M.C."/>
            <person name="Maeda N."/>
            <person name="Oyama R."/>
            <person name="Ravasi T."/>
            <person name="Lenhard B."/>
            <person name="Wells C."/>
            <person name="Kodzius R."/>
            <person name="Shimokawa K."/>
            <person name="Bajic V.B."/>
            <person name="Brenner S.E."/>
            <person name="Batalov S."/>
            <person name="Forrest A.R."/>
            <person name="Zavolan M."/>
            <person name="Davis M.J."/>
            <person name="Wilming L.G."/>
            <person name="Aidinis V."/>
            <person name="Allen J.E."/>
            <person name="Ambesi-Impiombato A."/>
            <person name="Apweiler R."/>
            <person name="Aturaliya R.N."/>
            <person name="Bailey T.L."/>
            <person name="Bansal M."/>
            <person name="Baxter L."/>
            <person name="Beisel K.W."/>
            <person name="Bersano T."/>
            <person name="Bono H."/>
            <person name="Chalk A.M."/>
            <person name="Chiu K.P."/>
            <person name="Choudhary V."/>
            <person name="Christoffels A."/>
            <person name="Clutterbuck D.R."/>
            <person name="Crowe M.L."/>
            <person name="Dalla E."/>
            <person name="Dalrymple B.P."/>
            <person name="de Bono B."/>
            <person name="Della Gatta G."/>
            <person name="di Bernardo D."/>
            <person name="Down T."/>
            <person name="Engstrom P."/>
            <person name="Fagiolini M."/>
            <person name="Faulkner G."/>
            <person name="Fletcher C.F."/>
            <person name="Fukushima T."/>
            <person name="Furuno M."/>
            <person name="Futaki S."/>
            <person name="Gariboldi M."/>
            <person name="Georgii-Hemming P."/>
            <person name="Gingeras T.R."/>
            <person name="Gojobori T."/>
            <person name="Green R.E."/>
            <person name="Gustincich S."/>
            <person name="Harbers M."/>
            <person name="Hayashi Y."/>
            <person name="Hensch T.K."/>
            <person name="Hirokawa N."/>
            <person name="Hill D."/>
            <person name="Huminiecki L."/>
            <person name="Iacono M."/>
            <person name="Ikeo K."/>
            <person name="Iwama A."/>
            <person name="Ishikawa T."/>
            <person name="Jakt M."/>
            <person name="Kanapin A."/>
            <person name="Katoh M."/>
            <person name="Kawasawa Y."/>
            <person name="Kelso J."/>
            <person name="Kitamura H."/>
            <person name="Kitano H."/>
            <person name="Kollias G."/>
            <person name="Krishnan S.P."/>
            <person name="Kruger A."/>
            <person name="Kummerfeld S.K."/>
            <person name="Kurochkin I.V."/>
            <person name="Lareau L.F."/>
            <person name="Lazarevic D."/>
            <person name="Lipovich L."/>
            <person name="Liu J."/>
            <person name="Liuni S."/>
            <person name="McWilliam S."/>
            <person name="Madan Babu M."/>
            <person name="Madera M."/>
            <person name="Marchionni L."/>
            <person name="Matsuda H."/>
            <person name="Matsuzawa S."/>
            <person name="Miki H."/>
            <person name="Mignone F."/>
            <person name="Miyake S."/>
            <person name="Morris K."/>
            <person name="Mottagui-Tabar S."/>
            <person name="Mulder N."/>
            <person name="Nakano N."/>
            <person name="Nakauchi H."/>
            <person name="Ng P."/>
            <person name="Nilsson R."/>
            <person name="Nishiguchi S."/>
            <person name="Nishikawa S."/>
            <person name="Nori F."/>
            <person name="Ohara O."/>
            <person name="Okazaki Y."/>
            <person name="Orlando V."/>
            <person name="Pang K.C."/>
            <person name="Pavan W.J."/>
            <person name="Pavesi G."/>
            <person name="Pesole G."/>
            <person name="Petrovsky N."/>
            <person name="Piazza S."/>
            <person name="Reed J."/>
            <person name="Reid J.F."/>
            <person name="Ring B.Z."/>
            <person name="Ringwald M."/>
            <person name="Rost B."/>
            <person name="Ruan Y."/>
            <person name="Salzberg S.L."/>
            <person name="Sandelin A."/>
            <person name="Schneider C."/>
            <person name="Schoenbach C."/>
            <person name="Sekiguchi K."/>
            <person name="Semple C.A."/>
            <person name="Seno S."/>
            <person name="Sessa L."/>
            <person name="Sheng Y."/>
            <person name="Shibata Y."/>
            <person name="Shimada H."/>
            <person name="Shimada K."/>
            <person name="Silva D."/>
            <person name="Sinclair B."/>
            <person name="Sperling S."/>
            <person name="Stupka E."/>
            <person name="Sugiura K."/>
            <person name="Sultana R."/>
            <person name="Takenaka Y."/>
            <person name="Taki K."/>
            <person name="Tammoja K."/>
            <person name="Tan S.L."/>
            <person name="Tang S."/>
            <person name="Taylor M.S."/>
            <person name="Tegner J."/>
            <person name="Teichmann S.A."/>
            <person name="Ueda H.R."/>
            <person name="van Nimwegen E."/>
            <person name="Verardo R."/>
            <person name="Wei C.L."/>
            <person name="Yagi K."/>
            <person name="Yamanishi H."/>
            <person name="Zabarovsky E."/>
            <person name="Zhu S."/>
            <person name="Zimmer A."/>
            <person name="Hide W."/>
            <person name="Bult C."/>
            <person name="Grimmond S.M."/>
            <person name="Teasdale R.D."/>
            <person name="Liu E.T."/>
            <person name="Brusic V."/>
            <person name="Quackenbush J."/>
            <person name="Wahlestedt C."/>
            <person name="Mattick J.S."/>
            <person name="Hume D.A."/>
            <person name="Kai C."/>
            <person name="Sasaki D."/>
            <person name="Tomaru Y."/>
            <person name="Fukuda S."/>
            <person name="Kanamori-Katayama M."/>
            <person name="Suzuki M."/>
            <person name="Aoki J."/>
            <person name="Arakawa T."/>
            <person name="Iida J."/>
            <person name="Imamura K."/>
            <person name="Itoh M."/>
            <person name="Kato T."/>
            <person name="Kawaji H."/>
            <person name="Kawagashira N."/>
            <person name="Kawashima T."/>
            <person name="Kojima M."/>
            <person name="Kondo S."/>
            <person name="Konno H."/>
            <person name="Nakano K."/>
            <person name="Ninomiya N."/>
            <person name="Nishio T."/>
            <person name="Okada M."/>
            <person name="Plessy C."/>
            <person name="Shibata K."/>
            <person name="Shiraki T."/>
            <person name="Suzuki S."/>
            <person name="Tagami M."/>
            <person name="Waki K."/>
            <person name="Watahiki A."/>
            <person name="Okamura-Oho Y."/>
            <person name="Suzuki H."/>
            <person name="Kawai J."/>
            <person name="Hayashizaki Y."/>
        </authorList>
    </citation>
    <scope>NUCLEOTIDE SEQUENCE [LARGE SCALE MRNA] (ISOFORMS 1 AND 2)</scope>
    <source>
        <strain evidence="37">C57BL/6J</strain>
        <tissue evidence="38">Fetal forelimb</tissue>
        <tissue evidence="39">Fetus</tissue>
        <tissue evidence="37">Skin</tissue>
    </source>
</reference>
<reference evidence="28 35" key="7">
    <citation type="journal article" date="2004" name="Genome Res.">
        <title>The status, quality, and expansion of the NIH full-length cDNA project: the Mammalian Gene Collection (MGC).</title>
        <authorList>
            <consortium name="The MGC Project Team"/>
        </authorList>
    </citation>
    <scope>NUCLEOTIDE SEQUENCE [LARGE SCALE MRNA] (ISOFORM 6)</scope>
    <source>
        <strain evidence="35">C57BL/6J</strain>
        <tissue evidence="35">Eye</tissue>
    </source>
</reference>
<reference key="8">
    <citation type="journal article" date="1998" name="Science">
        <title>A mammalian scaffold complex that selectively mediates MAP kinase activation.</title>
        <authorList>
            <person name="Whitmarsh A.J."/>
            <person name="Cavanagh J."/>
            <person name="Tournier C."/>
            <person name="Yasuda J."/>
            <person name="Davis R.J."/>
        </authorList>
    </citation>
    <scope>INTERACTION WITH MAPK8IP1/JIP1</scope>
</reference>
<reference key="9">
    <citation type="journal article" date="2000" name="Mol. Cell. Biol.">
        <title>Interaction of a mitogen-activated protein kinase signaling module with the neuronal protein JIP3.</title>
        <authorList>
            <person name="Kelkar N."/>
            <person name="Gupta S."/>
            <person name="Dickens M."/>
            <person name="Davis R.J."/>
        </authorList>
    </citation>
    <scope>INTERACTION WITH MAPK8IP3/JIP3</scope>
</reference>
<reference key="10">
    <citation type="journal article" date="2001" name="Genes Dev.">
        <title>MKK7 is an essential component of the JNK signal transduction pathway activated by proinflammatory cytokines.</title>
        <authorList>
            <person name="Tournier C."/>
            <person name="Dong C."/>
            <person name="Turner T.K."/>
            <person name="Jones S.N."/>
            <person name="Flavell R.A."/>
            <person name="Davis R.J."/>
        </authorList>
    </citation>
    <scope>FUNCTION</scope>
</reference>
<reference key="11">
    <citation type="journal article" date="2003" name="J. Biol. Chem.">
        <title>Different properties of SEK1 and MKK7 in dual phosphorylation of stress-induced activated protein kinase SAPK/JNK in embryonic stem cells.</title>
        <authorList>
            <person name="Kishimoto H."/>
            <person name="Nakagawa K."/>
            <person name="Watanabe T."/>
            <person name="Kitagawa D."/>
            <person name="Momose H."/>
            <person name="Seo J."/>
            <person name="Nishitai G."/>
            <person name="Shimizu N."/>
            <person name="Ohata S."/>
            <person name="Tanemura S."/>
            <person name="Asaka S."/>
            <person name="Goto T."/>
            <person name="Fukushi H."/>
            <person name="Yoshida H."/>
            <person name="Suzuki A."/>
            <person name="Sasaki T."/>
            <person name="Wada T."/>
            <person name="Penninger J.M."/>
            <person name="Nishina H."/>
            <person name="Katada T."/>
        </authorList>
    </citation>
    <scope>FUNCTION</scope>
</reference>
<reference key="12">
    <citation type="journal article" date="2007" name="Oncogene">
        <title>Differential regulation and properties of MAPKs.</title>
        <authorList>
            <person name="Raman M."/>
            <person name="Chen W."/>
            <person name="Cobb M.H."/>
        </authorList>
    </citation>
    <scope>REVIEW ON ACTIVITY REGULATION</scope>
</reference>
<reference key="13">
    <citation type="journal article" date="2009" name="Immunity">
        <title>The phagosomal proteome in interferon-gamma-activated macrophages.</title>
        <authorList>
            <person name="Trost M."/>
            <person name="English L."/>
            <person name="Lemieux S."/>
            <person name="Courcelles M."/>
            <person name="Desjardins M."/>
            <person name="Thibault P."/>
        </authorList>
    </citation>
    <scope>IDENTIFICATION BY MASS SPECTROMETRY [LARGE SCALE ANALYSIS]</scope>
</reference>
<reference key="14">
    <citation type="journal article" date="2010" name="J. Biochem.">
        <title>Diverse physiological functions of MKK4 and MKK7 during early embryogenesis.</title>
        <authorList>
            <person name="Asaoka Y."/>
            <person name="Nishina H."/>
        </authorList>
    </citation>
    <scope>REVIEW ON FUNCTION</scope>
</reference>
<reference key="15">
    <citation type="journal article" date="2011" name="Eur. J. Cell Biol.">
        <title>The bottleneck of JNK signaling: molecular and functional characteristics of MKK4 and MKK7.</title>
        <authorList>
            <person name="Haeusgen W."/>
            <person name="Herdegen T."/>
            <person name="Waetzig V."/>
        </authorList>
    </citation>
    <scope>REVIEW ON REGULATION</scope>
    <scope>REVIEW ON FUNCTION</scope>
</reference>
<reference key="16">
    <citation type="journal article" date="2013" name="Eur. J. Immunol.">
        <title>The POSH/JIP-1 scaffold network regulates TCR-mediated JNK1 signals and effector function in CD8(+) T cells.</title>
        <authorList>
            <person name="Cunningham C.A."/>
            <person name="Knudson K.M."/>
            <person name="Peng B.J."/>
            <person name="Teixeiro E."/>
            <person name="Daniels M.A."/>
        </authorList>
    </citation>
    <scope>IDENTIFICATION IN A COMPLEX WITH SH3RF1; RAC1; MAP3K11; MAPK8IP1 AND MAPK8</scope>
</reference>
<reference key="17">
    <citation type="journal article" date="2016" name="J. Immunol.">
        <title>POSH regulates CD4+ T cell differentiation and survival.</title>
        <authorList>
            <person name="Cunningham C.A."/>
            <person name="Cardwell L.N."/>
            <person name="Guan Y."/>
            <person name="Teixeiro E."/>
            <person name="Daniels M.A."/>
        </authorList>
    </citation>
    <scope>IDENTIFICATION IN A COMPLEX WITH SH3RF1; RAC2; MAP3K7; MAPK8IP1; MAPK8 AND MAPK9</scope>
</reference>
<reference key="18">
    <citation type="journal article" date="2017" name="Cell">
        <title>ApoE2, ApoE3, and ApoE4 Differentially Stimulate APP Transcription and Abeta Secretion.</title>
        <authorList>
            <person name="Huang Y.A."/>
            <person name="Zhou B."/>
            <person name="Wernig M."/>
            <person name="Suedhof T.C."/>
        </authorList>
    </citation>
    <scope>FUNCTION</scope>
</reference>
<accession>Q8CE90</accession>
<accession>O35406</accession>
<accession>O35720</accession>
<accession>O35871</accession>
<accession>O35872</accession>
<accession>O54780</accession>
<accession>O70242</accession>
<accession>O70243</accession>
<accession>Q8BSP1</accession>
<accession>Q9QWG6</accession>
<accession>Q9R1Z3</accession>
<accession>Q9R1Z4</accession>
<accession>Q9R1Z5</accession>
<accession>Q9R1Z6</accession>
<proteinExistence type="evidence at protein level"/>